<evidence type="ECO:0000255" key="1"/>
<evidence type="ECO:0000305" key="2"/>
<feature type="signal peptide" evidence="1">
    <location>
        <begin position="1"/>
        <end position="26"/>
    </location>
</feature>
<feature type="chain" id="PRO_0000049962" description="Uncharacterized protein YwcI">
    <location>
        <begin position="27"/>
        <end position="100"/>
    </location>
</feature>
<feature type="sequence conflict" description="In Ref. 1; CAA51602." evidence="2" ref="1">
    <original>A</original>
    <variation>R</variation>
    <location>
        <position position="27"/>
    </location>
</feature>
<proteinExistence type="inferred from homology"/>
<accession>P39607</accession>
<name>YWCI_BACSU</name>
<keyword id="KW-1185">Reference proteome</keyword>
<keyword id="KW-0732">Signal</keyword>
<sequence>MKRLLVSLRVWMVFLMNWVTPDRKTAAAAVYSAQRTYQRKAAVQAAGLVSFYEWRMAVNEEEKQKAKAAALYKRRCLQAFKESPKQERAGPHLYMAVKRR</sequence>
<reference key="1">
    <citation type="journal article" date="1993" name="Mol. Microbiol.">
        <title>Bacillus subtilis genome project: cloning and sequencing of the 97 kb region from 325 degrees to 333 degrees.</title>
        <authorList>
            <person name="Glaser P."/>
            <person name="Kunst F."/>
            <person name="Arnaud M."/>
            <person name="Coudart M.P."/>
            <person name="Gonzales W."/>
            <person name="Hullo M.-F."/>
            <person name="Ionescu M."/>
            <person name="Lubochinsky B."/>
            <person name="Marcelino L."/>
            <person name="Moszer I."/>
            <person name="Presecan E."/>
            <person name="Santana M."/>
            <person name="Schneider E."/>
            <person name="Schweizer J."/>
            <person name="Vertes A."/>
            <person name="Rapoport G."/>
            <person name="Danchin A."/>
        </authorList>
    </citation>
    <scope>NUCLEOTIDE SEQUENCE [GENOMIC DNA]</scope>
    <source>
        <strain>168</strain>
    </source>
</reference>
<reference key="2">
    <citation type="journal article" date="1997" name="Nature">
        <title>The complete genome sequence of the Gram-positive bacterium Bacillus subtilis.</title>
        <authorList>
            <person name="Kunst F."/>
            <person name="Ogasawara N."/>
            <person name="Moszer I."/>
            <person name="Albertini A.M."/>
            <person name="Alloni G."/>
            <person name="Azevedo V."/>
            <person name="Bertero M.G."/>
            <person name="Bessieres P."/>
            <person name="Bolotin A."/>
            <person name="Borchert S."/>
            <person name="Borriss R."/>
            <person name="Boursier L."/>
            <person name="Brans A."/>
            <person name="Braun M."/>
            <person name="Brignell S.C."/>
            <person name="Bron S."/>
            <person name="Brouillet S."/>
            <person name="Bruschi C.V."/>
            <person name="Caldwell B."/>
            <person name="Capuano V."/>
            <person name="Carter N.M."/>
            <person name="Choi S.-K."/>
            <person name="Codani J.-J."/>
            <person name="Connerton I.F."/>
            <person name="Cummings N.J."/>
            <person name="Daniel R.A."/>
            <person name="Denizot F."/>
            <person name="Devine K.M."/>
            <person name="Duesterhoeft A."/>
            <person name="Ehrlich S.D."/>
            <person name="Emmerson P.T."/>
            <person name="Entian K.-D."/>
            <person name="Errington J."/>
            <person name="Fabret C."/>
            <person name="Ferrari E."/>
            <person name="Foulger D."/>
            <person name="Fritz C."/>
            <person name="Fujita M."/>
            <person name="Fujita Y."/>
            <person name="Fuma S."/>
            <person name="Galizzi A."/>
            <person name="Galleron N."/>
            <person name="Ghim S.-Y."/>
            <person name="Glaser P."/>
            <person name="Goffeau A."/>
            <person name="Golightly E.J."/>
            <person name="Grandi G."/>
            <person name="Guiseppi G."/>
            <person name="Guy B.J."/>
            <person name="Haga K."/>
            <person name="Haiech J."/>
            <person name="Harwood C.R."/>
            <person name="Henaut A."/>
            <person name="Hilbert H."/>
            <person name="Holsappel S."/>
            <person name="Hosono S."/>
            <person name="Hullo M.-F."/>
            <person name="Itaya M."/>
            <person name="Jones L.-M."/>
            <person name="Joris B."/>
            <person name="Karamata D."/>
            <person name="Kasahara Y."/>
            <person name="Klaerr-Blanchard M."/>
            <person name="Klein C."/>
            <person name="Kobayashi Y."/>
            <person name="Koetter P."/>
            <person name="Koningstein G."/>
            <person name="Krogh S."/>
            <person name="Kumano M."/>
            <person name="Kurita K."/>
            <person name="Lapidus A."/>
            <person name="Lardinois S."/>
            <person name="Lauber J."/>
            <person name="Lazarevic V."/>
            <person name="Lee S.-M."/>
            <person name="Levine A."/>
            <person name="Liu H."/>
            <person name="Masuda S."/>
            <person name="Mauel C."/>
            <person name="Medigue C."/>
            <person name="Medina N."/>
            <person name="Mellado R.P."/>
            <person name="Mizuno M."/>
            <person name="Moestl D."/>
            <person name="Nakai S."/>
            <person name="Noback M."/>
            <person name="Noone D."/>
            <person name="O'Reilly M."/>
            <person name="Ogawa K."/>
            <person name="Ogiwara A."/>
            <person name="Oudega B."/>
            <person name="Park S.-H."/>
            <person name="Parro V."/>
            <person name="Pohl T.M."/>
            <person name="Portetelle D."/>
            <person name="Porwollik S."/>
            <person name="Prescott A.M."/>
            <person name="Presecan E."/>
            <person name="Pujic P."/>
            <person name="Purnelle B."/>
            <person name="Rapoport G."/>
            <person name="Rey M."/>
            <person name="Reynolds S."/>
            <person name="Rieger M."/>
            <person name="Rivolta C."/>
            <person name="Rocha E."/>
            <person name="Roche B."/>
            <person name="Rose M."/>
            <person name="Sadaie Y."/>
            <person name="Sato T."/>
            <person name="Scanlan E."/>
            <person name="Schleich S."/>
            <person name="Schroeter R."/>
            <person name="Scoffone F."/>
            <person name="Sekiguchi J."/>
            <person name="Sekowska A."/>
            <person name="Seror S.J."/>
            <person name="Serror P."/>
            <person name="Shin B.-S."/>
            <person name="Soldo B."/>
            <person name="Sorokin A."/>
            <person name="Tacconi E."/>
            <person name="Takagi T."/>
            <person name="Takahashi H."/>
            <person name="Takemaru K."/>
            <person name="Takeuchi M."/>
            <person name="Tamakoshi A."/>
            <person name="Tanaka T."/>
            <person name="Terpstra P."/>
            <person name="Tognoni A."/>
            <person name="Tosato V."/>
            <person name="Uchiyama S."/>
            <person name="Vandenbol M."/>
            <person name="Vannier F."/>
            <person name="Vassarotti A."/>
            <person name="Viari A."/>
            <person name="Wambutt R."/>
            <person name="Wedler E."/>
            <person name="Wedler H."/>
            <person name="Weitzenegger T."/>
            <person name="Winters P."/>
            <person name="Wipat A."/>
            <person name="Yamamoto H."/>
            <person name="Yamane K."/>
            <person name="Yasumoto K."/>
            <person name="Yata K."/>
            <person name="Yoshida K."/>
            <person name="Yoshikawa H.-F."/>
            <person name="Zumstein E."/>
            <person name="Yoshikawa H."/>
            <person name="Danchin A."/>
        </authorList>
    </citation>
    <scope>NUCLEOTIDE SEQUENCE [LARGE SCALE GENOMIC DNA]</scope>
    <source>
        <strain>168</strain>
    </source>
</reference>
<reference key="3">
    <citation type="journal article" date="2009" name="Microbiology">
        <title>From a consortium sequence to a unified sequence: the Bacillus subtilis 168 reference genome a decade later.</title>
        <authorList>
            <person name="Barbe V."/>
            <person name="Cruveiller S."/>
            <person name="Kunst F."/>
            <person name="Lenoble P."/>
            <person name="Meurice G."/>
            <person name="Sekowska A."/>
            <person name="Vallenet D."/>
            <person name="Wang T."/>
            <person name="Moszer I."/>
            <person name="Medigue C."/>
            <person name="Danchin A."/>
        </authorList>
    </citation>
    <scope>SEQUENCE REVISION TO 27</scope>
</reference>
<protein>
    <recommendedName>
        <fullName>Uncharacterized protein YwcI</fullName>
    </recommendedName>
</protein>
<gene>
    <name type="primary">ywcI</name>
    <name type="ordered locus">BSU38080</name>
    <name type="ORF">ipa-46d</name>
</gene>
<dbReference type="EMBL" id="X73124">
    <property type="protein sequence ID" value="CAA51602.1"/>
    <property type="molecule type" value="Genomic_DNA"/>
</dbReference>
<dbReference type="EMBL" id="AL009126">
    <property type="protein sequence ID" value="CAB15834.2"/>
    <property type="molecule type" value="Genomic_DNA"/>
</dbReference>
<dbReference type="PIR" id="S39701">
    <property type="entry name" value="S39701"/>
</dbReference>
<dbReference type="RefSeq" id="NP_391687.2">
    <property type="nucleotide sequence ID" value="NC_000964.3"/>
</dbReference>
<dbReference type="RefSeq" id="WP_003222155.1">
    <property type="nucleotide sequence ID" value="NZ_OZ025638.1"/>
</dbReference>
<dbReference type="FunCoup" id="P39607">
    <property type="interactions" value="46"/>
</dbReference>
<dbReference type="STRING" id="224308.BSU38080"/>
<dbReference type="PaxDb" id="224308-BSU38080"/>
<dbReference type="EnsemblBacteria" id="CAB15834">
    <property type="protein sequence ID" value="CAB15834"/>
    <property type="gene ID" value="BSU_38080"/>
</dbReference>
<dbReference type="GeneID" id="937275"/>
<dbReference type="KEGG" id="bsu:BSU38080"/>
<dbReference type="PATRIC" id="fig|224308.43.peg.3992"/>
<dbReference type="InParanoid" id="P39607"/>
<dbReference type="OrthoDB" id="2909986at2"/>
<dbReference type="BioCyc" id="BSUB:BSU38080-MONOMER"/>
<dbReference type="PRO" id="PR:P39607"/>
<dbReference type="Proteomes" id="UP000001570">
    <property type="component" value="Chromosome"/>
</dbReference>
<organism>
    <name type="scientific">Bacillus subtilis (strain 168)</name>
    <dbReference type="NCBI Taxonomy" id="224308"/>
    <lineage>
        <taxon>Bacteria</taxon>
        <taxon>Bacillati</taxon>
        <taxon>Bacillota</taxon>
        <taxon>Bacilli</taxon>
        <taxon>Bacillales</taxon>
        <taxon>Bacillaceae</taxon>
        <taxon>Bacillus</taxon>
    </lineage>
</organism>